<feature type="chain" id="PRO_0000338777" description="Translation initiation factor IF-1 2">
    <location>
        <begin position="1"/>
        <end position="87"/>
    </location>
</feature>
<feature type="domain" description="S1-like" evidence="1">
    <location>
        <begin position="1"/>
        <end position="72"/>
    </location>
</feature>
<feature type="region of interest" description="Disordered" evidence="2">
    <location>
        <begin position="68"/>
        <end position="87"/>
    </location>
</feature>
<feature type="compositionally biased region" description="Pro residues" evidence="2">
    <location>
        <begin position="77"/>
        <end position="87"/>
    </location>
</feature>
<reference key="1">
    <citation type="submission" date="2006-08" db="EMBL/GenBank/DDBJ databases">
        <title>Complete sequence of chromosome 2 of Burkholderia cenocepacia HI2424.</title>
        <authorList>
            <person name="Copeland A."/>
            <person name="Lucas S."/>
            <person name="Lapidus A."/>
            <person name="Barry K."/>
            <person name="Detter J.C."/>
            <person name="Glavina del Rio T."/>
            <person name="Hammon N."/>
            <person name="Israni S."/>
            <person name="Pitluck S."/>
            <person name="Chain P."/>
            <person name="Malfatti S."/>
            <person name="Shin M."/>
            <person name="Vergez L."/>
            <person name="Schmutz J."/>
            <person name="Larimer F."/>
            <person name="Land M."/>
            <person name="Hauser L."/>
            <person name="Kyrpides N."/>
            <person name="Kim E."/>
            <person name="LiPuma J.J."/>
            <person name="Gonzalez C.F."/>
            <person name="Konstantinidis K."/>
            <person name="Tiedje J.M."/>
            <person name="Richardson P."/>
        </authorList>
    </citation>
    <scope>NUCLEOTIDE SEQUENCE [LARGE SCALE GENOMIC DNA]</scope>
    <source>
        <strain>HI2424</strain>
    </source>
</reference>
<name>IF12_BURCH</name>
<gene>
    <name evidence="1" type="primary">infA2</name>
    <name type="ordered locus">Bcen2424_4463</name>
</gene>
<protein>
    <recommendedName>
        <fullName evidence="1">Translation initiation factor IF-1 2</fullName>
    </recommendedName>
</protein>
<keyword id="KW-0963">Cytoplasm</keyword>
<keyword id="KW-0396">Initiation factor</keyword>
<keyword id="KW-0648">Protein biosynthesis</keyword>
<keyword id="KW-0694">RNA-binding</keyword>
<keyword id="KW-0699">rRNA-binding</keyword>
<proteinExistence type="inferred from homology"/>
<evidence type="ECO:0000255" key="1">
    <source>
        <dbReference type="HAMAP-Rule" id="MF_00075"/>
    </source>
</evidence>
<evidence type="ECO:0000256" key="2">
    <source>
        <dbReference type="SAM" id="MobiDB-lite"/>
    </source>
</evidence>
<sequence length="87" mass="9843">MAKEELLELDGIVDEVLPDSKYRVTLENGVVVGAYASGRMRKNHIRILAGDRVTLELSVYDLTKGRINFRHKDANSPRPPRSGQPRR</sequence>
<comment type="function">
    <text evidence="1">One of the essential components for the initiation of protein synthesis. Stabilizes the binding of IF-2 and IF-3 on the 30S subunit to which N-formylmethionyl-tRNA(fMet) subsequently binds. Helps modulate mRNA selection, yielding the 30S pre-initiation complex (PIC). Upon addition of the 50S ribosomal subunit IF-1, IF-2 and IF-3 are released leaving the mature 70S translation initiation complex.</text>
</comment>
<comment type="subunit">
    <text evidence="1">Component of the 30S ribosomal translation pre-initiation complex which assembles on the 30S ribosome in the order IF-2 and IF-3, IF-1 and N-formylmethionyl-tRNA(fMet); mRNA recruitment can occur at any time during PIC assembly.</text>
</comment>
<comment type="subcellular location">
    <subcellularLocation>
        <location evidence="1">Cytoplasm</location>
    </subcellularLocation>
</comment>
<comment type="similarity">
    <text evidence="1">Belongs to the IF-1 family.</text>
</comment>
<organism>
    <name type="scientific">Burkholderia cenocepacia (strain HI2424)</name>
    <dbReference type="NCBI Taxonomy" id="331272"/>
    <lineage>
        <taxon>Bacteria</taxon>
        <taxon>Pseudomonadati</taxon>
        <taxon>Pseudomonadota</taxon>
        <taxon>Betaproteobacteria</taxon>
        <taxon>Burkholderiales</taxon>
        <taxon>Burkholderiaceae</taxon>
        <taxon>Burkholderia</taxon>
        <taxon>Burkholderia cepacia complex</taxon>
    </lineage>
</organism>
<dbReference type="EMBL" id="CP000459">
    <property type="protein sequence ID" value="ABK11197.1"/>
    <property type="molecule type" value="Genomic_DNA"/>
</dbReference>
<dbReference type="SMR" id="A0B0M1"/>
<dbReference type="KEGG" id="bch:Bcen2424_4463"/>
<dbReference type="HOGENOM" id="CLU_151267_4_1_4"/>
<dbReference type="GO" id="GO:0005829">
    <property type="term" value="C:cytosol"/>
    <property type="evidence" value="ECO:0007669"/>
    <property type="project" value="TreeGrafter"/>
</dbReference>
<dbReference type="GO" id="GO:0043022">
    <property type="term" value="F:ribosome binding"/>
    <property type="evidence" value="ECO:0007669"/>
    <property type="project" value="UniProtKB-UniRule"/>
</dbReference>
<dbReference type="GO" id="GO:0019843">
    <property type="term" value="F:rRNA binding"/>
    <property type="evidence" value="ECO:0007669"/>
    <property type="project" value="UniProtKB-UniRule"/>
</dbReference>
<dbReference type="GO" id="GO:0003743">
    <property type="term" value="F:translation initiation factor activity"/>
    <property type="evidence" value="ECO:0007669"/>
    <property type="project" value="UniProtKB-UniRule"/>
</dbReference>
<dbReference type="CDD" id="cd04451">
    <property type="entry name" value="S1_IF1"/>
    <property type="match status" value="1"/>
</dbReference>
<dbReference type="FunFam" id="2.40.50.140:FF:000002">
    <property type="entry name" value="Translation initiation factor IF-1"/>
    <property type="match status" value="1"/>
</dbReference>
<dbReference type="Gene3D" id="2.40.50.140">
    <property type="entry name" value="Nucleic acid-binding proteins"/>
    <property type="match status" value="1"/>
</dbReference>
<dbReference type="HAMAP" id="MF_00075">
    <property type="entry name" value="IF_1"/>
    <property type="match status" value="1"/>
</dbReference>
<dbReference type="InterPro" id="IPR012340">
    <property type="entry name" value="NA-bd_OB-fold"/>
</dbReference>
<dbReference type="InterPro" id="IPR006196">
    <property type="entry name" value="RNA-binding_domain_S1_IF1"/>
</dbReference>
<dbReference type="InterPro" id="IPR004368">
    <property type="entry name" value="TIF_IF1"/>
</dbReference>
<dbReference type="NCBIfam" id="TIGR00008">
    <property type="entry name" value="infA"/>
    <property type="match status" value="1"/>
</dbReference>
<dbReference type="PANTHER" id="PTHR33370">
    <property type="entry name" value="TRANSLATION INITIATION FACTOR IF-1, CHLOROPLASTIC"/>
    <property type="match status" value="1"/>
</dbReference>
<dbReference type="PANTHER" id="PTHR33370:SF1">
    <property type="entry name" value="TRANSLATION INITIATION FACTOR IF-1, CHLOROPLASTIC"/>
    <property type="match status" value="1"/>
</dbReference>
<dbReference type="Pfam" id="PF01176">
    <property type="entry name" value="eIF-1a"/>
    <property type="match status" value="1"/>
</dbReference>
<dbReference type="SUPFAM" id="SSF50249">
    <property type="entry name" value="Nucleic acid-binding proteins"/>
    <property type="match status" value="1"/>
</dbReference>
<dbReference type="PROSITE" id="PS50832">
    <property type="entry name" value="S1_IF1_TYPE"/>
    <property type="match status" value="1"/>
</dbReference>
<accession>A0B0M1</accession>